<dbReference type="EMBL" id="BC120373">
    <property type="protein sequence ID" value="AAI20374.1"/>
    <property type="molecule type" value="mRNA"/>
</dbReference>
<dbReference type="RefSeq" id="NP_001069380.1">
    <property type="nucleotide sequence ID" value="NM_001075912.1"/>
</dbReference>
<dbReference type="SMR" id="Q0VC36"/>
<dbReference type="FunCoup" id="Q0VC36">
    <property type="interactions" value="246"/>
</dbReference>
<dbReference type="STRING" id="9913.ENSBTAP00000012154"/>
<dbReference type="PaxDb" id="9913-ENSBTAP00000012154"/>
<dbReference type="PeptideAtlas" id="Q0VC36"/>
<dbReference type="Ensembl" id="ENSBTAT00000012154.6">
    <property type="protein sequence ID" value="ENSBTAP00000012154.4"/>
    <property type="gene ID" value="ENSBTAG00000009223.6"/>
</dbReference>
<dbReference type="GeneID" id="528453"/>
<dbReference type="KEGG" id="bta:528453"/>
<dbReference type="CTD" id="2810"/>
<dbReference type="VEuPathDB" id="HostDB:ENSBTAG00000009223"/>
<dbReference type="VGNC" id="VGNC:34517">
    <property type="gene designation" value="SFN"/>
</dbReference>
<dbReference type="eggNOG" id="KOG0841">
    <property type="taxonomic scope" value="Eukaryota"/>
</dbReference>
<dbReference type="GeneTree" id="ENSGT01110000267238"/>
<dbReference type="HOGENOM" id="CLU_058290_1_0_1"/>
<dbReference type="InParanoid" id="Q0VC36"/>
<dbReference type="OMA" id="ECRVFYL"/>
<dbReference type="OrthoDB" id="10260625at2759"/>
<dbReference type="TreeFam" id="TF102003"/>
<dbReference type="Reactome" id="R-BTA-111447">
    <property type="pathway name" value="Activation of BAD and translocation to mitochondria"/>
</dbReference>
<dbReference type="Reactome" id="R-BTA-5625740">
    <property type="pathway name" value="RHO GTPases activate PKNs"/>
</dbReference>
<dbReference type="Reactome" id="R-BTA-5628897">
    <property type="pathway name" value="TP53 Regulates Metabolic Genes"/>
</dbReference>
<dbReference type="Reactome" id="R-BTA-6804114">
    <property type="pathway name" value="TP53 Regulates Transcription of Genes Involved in G2 Cell Cycle Arrest"/>
</dbReference>
<dbReference type="Reactome" id="R-BTA-75035">
    <property type="pathway name" value="Chk1/Chk2(Cds1) mediated inactivation of Cyclin B:Cdk1 complex"/>
</dbReference>
<dbReference type="Reactome" id="R-BTA-9614399">
    <property type="pathway name" value="Regulation of localization of FOXO transcription factors"/>
</dbReference>
<dbReference type="Proteomes" id="UP000009136">
    <property type="component" value="Chromosome 2"/>
</dbReference>
<dbReference type="Bgee" id="ENSBTAG00000009223">
    <property type="expression patterns" value="Expressed in esophagus and 75 other cell types or tissues"/>
</dbReference>
<dbReference type="GO" id="GO:0005737">
    <property type="term" value="C:cytoplasm"/>
    <property type="evidence" value="ECO:0000250"/>
    <property type="project" value="UniProtKB"/>
</dbReference>
<dbReference type="GO" id="GO:0005829">
    <property type="term" value="C:cytosol"/>
    <property type="evidence" value="ECO:0000250"/>
    <property type="project" value="UniProtKB"/>
</dbReference>
<dbReference type="GO" id="GO:0005576">
    <property type="term" value="C:extracellular region"/>
    <property type="evidence" value="ECO:0007669"/>
    <property type="project" value="UniProtKB-SubCell"/>
</dbReference>
<dbReference type="GO" id="GO:0005634">
    <property type="term" value="C:nucleus"/>
    <property type="evidence" value="ECO:0007669"/>
    <property type="project" value="UniProtKB-SubCell"/>
</dbReference>
<dbReference type="GO" id="GO:0042802">
    <property type="term" value="F:identical protein binding"/>
    <property type="evidence" value="ECO:0007669"/>
    <property type="project" value="Ensembl"/>
</dbReference>
<dbReference type="GO" id="GO:0050815">
    <property type="term" value="F:phosphoserine residue binding"/>
    <property type="evidence" value="ECO:0000250"/>
    <property type="project" value="UniProtKB"/>
</dbReference>
<dbReference type="GO" id="GO:0019901">
    <property type="term" value="F:protein kinase binding"/>
    <property type="evidence" value="ECO:0000318"/>
    <property type="project" value="GO_Central"/>
</dbReference>
<dbReference type="GO" id="GO:0140311">
    <property type="term" value="F:protein sequestering activity"/>
    <property type="evidence" value="ECO:0000250"/>
    <property type="project" value="UniProtKB"/>
</dbReference>
<dbReference type="GO" id="GO:0141156">
    <property type="term" value="P:cAMP/PKA signal transduction"/>
    <property type="evidence" value="ECO:0007669"/>
    <property type="project" value="Ensembl"/>
</dbReference>
<dbReference type="GO" id="GO:0061436">
    <property type="term" value="P:establishment of skin barrier"/>
    <property type="evidence" value="ECO:0000250"/>
    <property type="project" value="UniProtKB"/>
</dbReference>
<dbReference type="GO" id="GO:0008630">
    <property type="term" value="P:intrinsic apoptotic signaling pathway in response to DNA damage"/>
    <property type="evidence" value="ECO:0007669"/>
    <property type="project" value="Ensembl"/>
</dbReference>
<dbReference type="GO" id="GO:0031424">
    <property type="term" value="P:keratinization"/>
    <property type="evidence" value="ECO:0007669"/>
    <property type="project" value="Ensembl"/>
</dbReference>
<dbReference type="GO" id="GO:0003334">
    <property type="term" value="P:keratinocyte development"/>
    <property type="evidence" value="ECO:0007669"/>
    <property type="project" value="Ensembl"/>
</dbReference>
<dbReference type="GO" id="GO:0043616">
    <property type="term" value="P:keratinocyte proliferation"/>
    <property type="evidence" value="ECO:0007669"/>
    <property type="project" value="Ensembl"/>
</dbReference>
<dbReference type="GO" id="GO:0045824">
    <property type="term" value="P:negative regulation of innate immune response"/>
    <property type="evidence" value="ECO:0000250"/>
    <property type="project" value="UniProtKB"/>
</dbReference>
<dbReference type="GO" id="GO:0010839">
    <property type="term" value="P:negative regulation of keratinocyte proliferation"/>
    <property type="evidence" value="ECO:0007669"/>
    <property type="project" value="Ensembl"/>
</dbReference>
<dbReference type="GO" id="GO:1903077">
    <property type="term" value="P:negative regulation of protein localization to plasma membrane"/>
    <property type="evidence" value="ECO:0007669"/>
    <property type="project" value="Ensembl"/>
</dbReference>
<dbReference type="GO" id="GO:2000647">
    <property type="term" value="P:negative regulation of stem cell proliferation"/>
    <property type="evidence" value="ECO:0007669"/>
    <property type="project" value="Ensembl"/>
</dbReference>
<dbReference type="GO" id="GO:0000122">
    <property type="term" value="P:negative regulation of transcription by RNA polymerase II"/>
    <property type="evidence" value="ECO:0007669"/>
    <property type="project" value="Ensembl"/>
</dbReference>
<dbReference type="GO" id="GO:0045785">
    <property type="term" value="P:positive regulation of cell adhesion"/>
    <property type="evidence" value="ECO:0007669"/>
    <property type="project" value="Ensembl"/>
</dbReference>
<dbReference type="GO" id="GO:0030307">
    <property type="term" value="P:positive regulation of cell growth"/>
    <property type="evidence" value="ECO:0007669"/>
    <property type="project" value="Ensembl"/>
</dbReference>
<dbReference type="GO" id="GO:0045606">
    <property type="term" value="P:positive regulation of epidermal cell differentiation"/>
    <property type="evidence" value="ECO:0000250"/>
    <property type="project" value="UniProtKB"/>
</dbReference>
<dbReference type="GO" id="GO:0046827">
    <property type="term" value="P:positive regulation of protein export from nucleus"/>
    <property type="evidence" value="ECO:0007669"/>
    <property type="project" value="Ensembl"/>
</dbReference>
<dbReference type="GO" id="GO:0006611">
    <property type="term" value="P:protein export from nucleus"/>
    <property type="evidence" value="ECO:0007669"/>
    <property type="project" value="Ensembl"/>
</dbReference>
<dbReference type="GO" id="GO:0008104">
    <property type="term" value="P:protein localization"/>
    <property type="evidence" value="ECO:0000318"/>
    <property type="project" value="GO_Central"/>
</dbReference>
<dbReference type="GO" id="GO:0051726">
    <property type="term" value="P:regulation of cell cycle"/>
    <property type="evidence" value="ECO:0007669"/>
    <property type="project" value="Ensembl"/>
</dbReference>
<dbReference type="GO" id="GO:0022407">
    <property type="term" value="P:regulation of cell-cell adhesion"/>
    <property type="evidence" value="ECO:0000250"/>
    <property type="project" value="UniProtKB"/>
</dbReference>
<dbReference type="GO" id="GO:0010482">
    <property type="term" value="P:regulation of epidermal cell division"/>
    <property type="evidence" value="ECO:0000250"/>
    <property type="project" value="UniProtKB"/>
</dbReference>
<dbReference type="GO" id="GO:0032880">
    <property type="term" value="P:regulation of protein localization"/>
    <property type="evidence" value="ECO:0000250"/>
    <property type="project" value="UniProtKB"/>
</dbReference>
<dbReference type="GO" id="GO:0001836">
    <property type="term" value="P:release of cytochrome c from mitochondria"/>
    <property type="evidence" value="ECO:0007669"/>
    <property type="project" value="Ensembl"/>
</dbReference>
<dbReference type="GO" id="GO:0007165">
    <property type="term" value="P:signal transduction"/>
    <property type="evidence" value="ECO:0000318"/>
    <property type="project" value="GO_Central"/>
</dbReference>
<dbReference type="GO" id="GO:0072089">
    <property type="term" value="P:stem cell proliferation"/>
    <property type="evidence" value="ECO:0007669"/>
    <property type="project" value="Ensembl"/>
</dbReference>
<dbReference type="CDD" id="cd10019">
    <property type="entry name" value="14-3-3_sigma"/>
    <property type="match status" value="1"/>
</dbReference>
<dbReference type="FunFam" id="1.20.190.20:FF:000001">
    <property type="entry name" value="14-3-3 gamma 1"/>
    <property type="match status" value="1"/>
</dbReference>
<dbReference type="Gene3D" id="1.20.190.20">
    <property type="entry name" value="14-3-3 domain"/>
    <property type="match status" value="1"/>
</dbReference>
<dbReference type="InterPro" id="IPR000308">
    <property type="entry name" value="14-3-3"/>
</dbReference>
<dbReference type="InterPro" id="IPR023409">
    <property type="entry name" value="14-3-3_CS"/>
</dbReference>
<dbReference type="InterPro" id="IPR036815">
    <property type="entry name" value="14-3-3_dom_sf"/>
</dbReference>
<dbReference type="InterPro" id="IPR023410">
    <property type="entry name" value="14-3-3_domain"/>
</dbReference>
<dbReference type="InterPro" id="IPR037435">
    <property type="entry name" value="14-3-3_sigma"/>
</dbReference>
<dbReference type="PANTHER" id="PTHR18860">
    <property type="entry name" value="14-3-3 PROTEIN"/>
    <property type="match status" value="1"/>
</dbReference>
<dbReference type="Pfam" id="PF00244">
    <property type="entry name" value="14-3-3"/>
    <property type="match status" value="1"/>
</dbReference>
<dbReference type="PIRSF" id="PIRSF000868">
    <property type="entry name" value="14-3-3"/>
    <property type="match status" value="1"/>
</dbReference>
<dbReference type="PRINTS" id="PR00305">
    <property type="entry name" value="1433ZETA"/>
</dbReference>
<dbReference type="SMART" id="SM00101">
    <property type="entry name" value="14_3_3"/>
    <property type="match status" value="1"/>
</dbReference>
<dbReference type="SUPFAM" id="SSF48445">
    <property type="entry name" value="14-3-3 protein"/>
    <property type="match status" value="1"/>
</dbReference>
<dbReference type="PROSITE" id="PS00796">
    <property type="entry name" value="1433_1"/>
    <property type="match status" value="1"/>
</dbReference>
<dbReference type="PROSITE" id="PS00797">
    <property type="entry name" value="1433_2"/>
    <property type="match status" value="1"/>
</dbReference>
<sequence>MERASLIQKAKLAEQAERYEDMAAFMKSAVEKGEELSCEERNLLSVAYKNVVGGQRAAWRVLSSIEQKSNEESSEEKGPEVQEYREKVETELRGVCDTVLGLLDTHLIKEAGDAESRVFYLKMKGDYYRYLAEVATGDDKKRIIDSARSAYQEAMDISKKEMPPTNPIRLGLALNFSVFHYEIANSPEEAISLAKTTFDEAMADLHTLSEDSYKDSTLIMQLLRDNLTLWTADNAGEEGGEAPEEPQS</sequence>
<accession>Q0VC36</accession>
<proteinExistence type="evidence at transcript level"/>
<keyword id="KW-0963">Cytoplasm</keyword>
<keyword id="KW-0539">Nucleus</keyword>
<keyword id="KW-0597">Phosphoprotein</keyword>
<keyword id="KW-1185">Reference proteome</keyword>
<keyword id="KW-0964">Secreted</keyword>
<keyword id="KW-0832">Ubl conjugation</keyword>
<feature type="chain" id="PRO_0000262593" description="14-3-3 protein sigma">
    <location>
        <begin position="1"/>
        <end position="248"/>
    </location>
</feature>
<feature type="site" description="Interaction with phosphoserine on interacting protein" evidence="1">
    <location>
        <position position="56"/>
    </location>
</feature>
<feature type="site" description="Interaction with phosphoserine on interacting protein" evidence="1">
    <location>
        <position position="129"/>
    </location>
</feature>
<feature type="modified residue" description="Phosphoserine" evidence="3">
    <location>
        <position position="5"/>
    </location>
</feature>
<feature type="modified residue" description="Phosphoserine" evidence="3">
    <location>
        <position position="74"/>
    </location>
</feature>
<feature type="modified residue" description="Phosphoserine" evidence="3">
    <location>
        <position position="248"/>
    </location>
</feature>
<organism>
    <name type="scientific">Bos taurus</name>
    <name type="common">Bovine</name>
    <dbReference type="NCBI Taxonomy" id="9913"/>
    <lineage>
        <taxon>Eukaryota</taxon>
        <taxon>Metazoa</taxon>
        <taxon>Chordata</taxon>
        <taxon>Craniata</taxon>
        <taxon>Vertebrata</taxon>
        <taxon>Euteleostomi</taxon>
        <taxon>Mammalia</taxon>
        <taxon>Eutheria</taxon>
        <taxon>Laurasiatheria</taxon>
        <taxon>Artiodactyla</taxon>
        <taxon>Ruminantia</taxon>
        <taxon>Pecora</taxon>
        <taxon>Bovidae</taxon>
        <taxon>Bovinae</taxon>
        <taxon>Bos</taxon>
    </lineage>
</organism>
<evidence type="ECO:0000250" key="1"/>
<evidence type="ECO:0000250" key="2">
    <source>
        <dbReference type="UniProtKB" id="O70456"/>
    </source>
</evidence>
<evidence type="ECO:0000250" key="3">
    <source>
        <dbReference type="UniProtKB" id="P31947"/>
    </source>
</evidence>
<evidence type="ECO:0000305" key="4"/>
<reference key="1">
    <citation type="submission" date="2006-08" db="EMBL/GenBank/DDBJ databases">
        <authorList>
            <consortium name="NIH - Mammalian Gene Collection (MGC) project"/>
        </authorList>
    </citation>
    <scope>NUCLEOTIDE SEQUENCE [LARGE SCALE MRNA]</scope>
    <source>
        <strain>Hereford</strain>
        <tissue>Fetal skin</tissue>
    </source>
</reference>
<comment type="function">
    <text evidence="2 3">Adapter protein implicated in the regulation of a large spectrum of both general and specialized signaling pathways. Binds to a large number of partners, usually by recognition of a phosphoserine or phosphothreonine motif. Binding generally results in the modulation of the activity of the binding partner. Promotes cytosolic retention of GBP1 GTPase by binding to phosphorylated GBP1, thereby inhibiting the innate immune response. Also acts as a TP53/p53-regulated inhibitor of G2/M progression (By similarity). When bound to KRT17, regulates protein synthesis and epithelial cell growth by stimulating Akt/mTOR pathway (By similarity). Acts to maintain desmosome cell junction adhesion in epithelial cells via interacting with and sequestering PKP3 to the cytoplasm, thereby restricting its translocation to existing desmosome structures and therefore maintaining desmosome protein homeostasis (By similarity). Also acts to facilitate PKP3 exchange at desmosome plaques, thereby maintaining keratinocyte intercellular adhesion (By similarity). May also regulate MDM2 autoubiquitination and degradation and thereby activate p53/TP53 (By similarity).</text>
</comment>
<comment type="subunit">
    <text evidence="2 3">Homodimer (By similarity). Interacts with KRT17 and SAMSN1 (By similarity). Found in a complex with XPO7, EIF4A1, ARHGAP1, VPS26A, VPS29 and VPS35. Interacts with GAB2. Interacts with SRPK2. Interacts with COPS6. Interacts with COP1; this interaction leads to proteasomal degradation. Interacts with the 'Thr-369' phosphorylated form of DAPK2. Interacts with PI4KB. Interacts with SLITRK1. Interacts with LRRK2; this interaction is dependent on LRRK2 phosphorylation (By similarity). Interacts with PKP3 (via N-terminus); the interaction maintains the cytoplasmic pool of PKP3, facilitates PKP3 exchange at desmosomes and restricts PKP3 localization to existing desmosome cell junctions (By similarity). Interacts with LCP2 (By similarity).</text>
</comment>
<comment type="subcellular location">
    <subcellularLocation>
        <location evidence="3">Cytoplasm</location>
    </subcellularLocation>
    <subcellularLocation>
        <location evidence="2">Nucleus</location>
    </subcellularLocation>
    <subcellularLocation>
        <location evidence="3">Secreted</location>
    </subcellularLocation>
    <text evidence="3">May be secreted by a non-classical secretory pathway.</text>
</comment>
<comment type="PTM">
    <text evidence="3">Ubiquitinated. Ubiquitination by RFFL induces proteasomal degradation and indirectly regulates p53/TP53 activation.</text>
</comment>
<comment type="miscellaneous">
    <text>14-3-3 proteins have been shown to be PKC activators, but this effect could be non-specific and only due to the acidic nature of the protein.</text>
</comment>
<comment type="similarity">
    <text evidence="4">Belongs to the 14-3-3 family.</text>
</comment>
<name>1433S_BOVIN</name>
<gene>
    <name type="primary">SFN</name>
</gene>
<protein>
    <recommendedName>
        <fullName>14-3-3 protein sigma</fullName>
    </recommendedName>
    <alternativeName>
        <fullName>Stratifin</fullName>
    </alternativeName>
</protein>